<proteinExistence type="inferred from homology"/>
<accession>A4WAM1</accession>
<protein>
    <recommendedName>
        <fullName evidence="1">Undecaprenyl phosphate-alpha-4-amino-4-deoxy-L-arabinose arabinosyl transferase</fullName>
        <ecNumber evidence="1">2.4.2.43</ecNumber>
    </recommendedName>
    <alternativeName>
        <fullName evidence="1">4-amino-4-deoxy-L-arabinose lipid A transferase</fullName>
    </alternativeName>
    <alternativeName>
        <fullName evidence="1">Lipid IV(A) 4-amino-4-deoxy-L-arabinosyltransferase</fullName>
    </alternativeName>
    <alternativeName>
        <fullName evidence="1">Undecaprenyl phosphate-alpha-L-Ara4N transferase</fullName>
    </alternativeName>
</protein>
<gene>
    <name evidence="1" type="primary">arnT</name>
    <name type="ordered locus">Ent638_2075</name>
</gene>
<evidence type="ECO:0000255" key="1">
    <source>
        <dbReference type="HAMAP-Rule" id="MF_01165"/>
    </source>
</evidence>
<feature type="chain" id="PRO_1000065665" description="Undecaprenyl phosphate-alpha-4-amino-4-deoxy-L-arabinose arabinosyl transferase">
    <location>
        <begin position="1"/>
        <end position="553"/>
    </location>
</feature>
<feature type="transmembrane region" description="Helical" evidence="1">
    <location>
        <begin position="8"/>
        <end position="28"/>
    </location>
</feature>
<feature type="transmembrane region" description="Helical" evidence="1">
    <location>
        <begin position="83"/>
        <end position="103"/>
    </location>
</feature>
<feature type="transmembrane region" description="Helical" evidence="1">
    <location>
        <begin position="111"/>
        <end position="131"/>
    </location>
</feature>
<feature type="transmembrane region" description="Helical" evidence="1">
    <location>
        <begin position="132"/>
        <end position="152"/>
    </location>
</feature>
<feature type="transmembrane region" description="Helical" evidence="1">
    <location>
        <begin position="176"/>
        <end position="196"/>
    </location>
</feature>
<feature type="transmembrane region" description="Helical" evidence="1">
    <location>
        <begin position="204"/>
        <end position="224"/>
    </location>
</feature>
<feature type="transmembrane region" description="Helical" evidence="1">
    <location>
        <begin position="255"/>
        <end position="275"/>
    </location>
</feature>
<feature type="transmembrane region" description="Helical" evidence="1">
    <location>
        <begin position="288"/>
        <end position="308"/>
    </location>
</feature>
<feature type="transmembrane region" description="Helical" evidence="1">
    <location>
        <begin position="317"/>
        <end position="337"/>
    </location>
</feature>
<feature type="transmembrane region" description="Helical" evidence="1">
    <location>
        <begin position="350"/>
        <end position="370"/>
    </location>
</feature>
<feature type="transmembrane region" description="Helical" evidence="1">
    <location>
        <begin position="380"/>
        <end position="400"/>
    </location>
</feature>
<feature type="transmembrane region" description="Helical" evidence="1">
    <location>
        <begin position="407"/>
        <end position="427"/>
    </location>
</feature>
<organism>
    <name type="scientific">Enterobacter sp. (strain 638)</name>
    <dbReference type="NCBI Taxonomy" id="399742"/>
    <lineage>
        <taxon>Bacteria</taxon>
        <taxon>Pseudomonadati</taxon>
        <taxon>Pseudomonadota</taxon>
        <taxon>Gammaproteobacteria</taxon>
        <taxon>Enterobacterales</taxon>
        <taxon>Enterobacteriaceae</taxon>
        <taxon>Enterobacter</taxon>
    </lineage>
</organism>
<comment type="function">
    <text evidence="1">Catalyzes the transfer of the L-Ara4N moiety of the glycolipid undecaprenyl phosphate-alpha-L-Ara4N to lipid A. The modified arabinose is attached to lipid A and is required for resistance to polymyxin and cationic antimicrobial peptides.</text>
</comment>
<comment type="catalytic activity">
    <reaction evidence="1">
        <text>4-amino-4-deoxy-alpha-L-arabinopyranosyl di-trans,octa-cis-undecaprenyl phosphate + lipid IVA = lipid IIA + di-trans,octa-cis-undecaprenyl phosphate.</text>
        <dbReference type="EC" id="2.4.2.43"/>
    </reaction>
</comment>
<comment type="pathway">
    <text evidence="1">Lipopolysaccharide metabolism; 4-amino-4-deoxy-beta-L-arabinose-lipid A biosynthesis.</text>
</comment>
<comment type="subcellular location">
    <subcellularLocation>
        <location evidence="1">Cell inner membrane</location>
        <topology evidence="1">Multi-pass membrane protein</topology>
    </subcellularLocation>
</comment>
<comment type="similarity">
    <text evidence="1">Belongs to the glycosyltransferase 83 family.</text>
</comment>
<dbReference type="EC" id="2.4.2.43" evidence="1"/>
<dbReference type="EMBL" id="CP000653">
    <property type="protein sequence ID" value="ABP60751.1"/>
    <property type="molecule type" value="Genomic_DNA"/>
</dbReference>
<dbReference type="RefSeq" id="WP_012017466.1">
    <property type="nucleotide sequence ID" value="NC_009436.1"/>
</dbReference>
<dbReference type="SMR" id="A4WAM1"/>
<dbReference type="STRING" id="399742.Ent638_2075"/>
<dbReference type="CAZy" id="GT83">
    <property type="family name" value="Glycosyltransferase Family 83"/>
</dbReference>
<dbReference type="KEGG" id="ent:Ent638_2075"/>
<dbReference type="eggNOG" id="COG1807">
    <property type="taxonomic scope" value="Bacteria"/>
</dbReference>
<dbReference type="HOGENOM" id="CLU_019200_2_1_6"/>
<dbReference type="OrthoDB" id="9775035at2"/>
<dbReference type="UniPathway" id="UPA00037"/>
<dbReference type="Proteomes" id="UP000000230">
    <property type="component" value="Chromosome"/>
</dbReference>
<dbReference type="GO" id="GO:0005886">
    <property type="term" value="C:plasma membrane"/>
    <property type="evidence" value="ECO:0007669"/>
    <property type="project" value="UniProtKB-SubCell"/>
</dbReference>
<dbReference type="GO" id="GO:0103015">
    <property type="term" value="F:4-amino-4-deoxy-L-arabinose transferase activity"/>
    <property type="evidence" value="ECO:0007669"/>
    <property type="project" value="UniProtKB-EC"/>
</dbReference>
<dbReference type="GO" id="GO:0000030">
    <property type="term" value="F:mannosyltransferase activity"/>
    <property type="evidence" value="ECO:0007669"/>
    <property type="project" value="InterPro"/>
</dbReference>
<dbReference type="GO" id="GO:0009245">
    <property type="term" value="P:lipid A biosynthetic process"/>
    <property type="evidence" value="ECO:0007669"/>
    <property type="project" value="UniProtKB-UniRule"/>
</dbReference>
<dbReference type="GO" id="GO:0009103">
    <property type="term" value="P:lipopolysaccharide biosynthetic process"/>
    <property type="evidence" value="ECO:0007669"/>
    <property type="project" value="UniProtKB-KW"/>
</dbReference>
<dbReference type="GO" id="GO:0006493">
    <property type="term" value="P:protein O-linked glycosylation"/>
    <property type="evidence" value="ECO:0007669"/>
    <property type="project" value="InterPro"/>
</dbReference>
<dbReference type="GO" id="GO:0010041">
    <property type="term" value="P:response to iron(III) ion"/>
    <property type="evidence" value="ECO:0007669"/>
    <property type="project" value="TreeGrafter"/>
</dbReference>
<dbReference type="HAMAP" id="MF_01165">
    <property type="entry name" value="ArnT_transfer"/>
    <property type="match status" value="1"/>
</dbReference>
<dbReference type="InterPro" id="IPR022839">
    <property type="entry name" value="ArnT_tfrase"/>
</dbReference>
<dbReference type="InterPro" id="IPR003342">
    <property type="entry name" value="Glyco_trans_39/83"/>
</dbReference>
<dbReference type="InterPro" id="IPR050297">
    <property type="entry name" value="LipidA_mod_glycosyltrf_83"/>
</dbReference>
<dbReference type="NCBIfam" id="NF009784">
    <property type="entry name" value="PRK13279.1"/>
    <property type="match status" value="1"/>
</dbReference>
<dbReference type="PANTHER" id="PTHR33908">
    <property type="entry name" value="MANNOSYLTRANSFERASE YKCB-RELATED"/>
    <property type="match status" value="1"/>
</dbReference>
<dbReference type="PANTHER" id="PTHR33908:SF3">
    <property type="entry name" value="UNDECAPRENYL PHOSPHATE-ALPHA-4-AMINO-4-DEOXY-L-ARABINOSE ARABINOSYL TRANSFERASE"/>
    <property type="match status" value="1"/>
</dbReference>
<dbReference type="Pfam" id="PF02366">
    <property type="entry name" value="PMT"/>
    <property type="match status" value="1"/>
</dbReference>
<sequence>MKSAQYSLVLLLGFTLLYLLPLEFRALWQPDETRYAEISREMLSAGNWIVPHFLDVRYFEKPVAGYWINNLSQMIFGHNNFSVRFGAVFSTTLSALMVAWLAFRLWRDKTVAVLSGVIFLTCLLVYGVGTYAVLDPMITLWLVAAMCSFWLGANAQTRAGKAGGYILLGLACGMGVMTKGFLALAVPVLGVLPWVIAQKRWKEVLLFGPLAIISATLITLPWALAIAKAEPTFWHYFFWVEHIQRFAENDAQHKAPFWYYIPFLIAGCLPWVALLPGALKRSWNERHIESGTLYLLGWVVMPLLFFSIAKGKLPTYILPCFAPLAILLARHATQLVATPRTLKVNGWINTVFGAVCALIVLLVLAPWGIAKHPIYASHEVLKVIQASIAFLVWALVGYLTTRNNARLWQWAALCPLGIALLVGGMIPDKVVYSKHPQAFVDLVRPELESSRYILADSVGVGAGIAWEMKRSDITLYAKPGELDYGLTTFADAKDNFVSRDDFASWLALHRKEGNVSLVKLLSKDSVLEDSDVPAPDKVYHKGRFLLFFYEKTP</sequence>
<name>ARNT_ENT38</name>
<keyword id="KW-0997">Cell inner membrane</keyword>
<keyword id="KW-1003">Cell membrane</keyword>
<keyword id="KW-0328">Glycosyltransferase</keyword>
<keyword id="KW-0441">Lipid A biosynthesis</keyword>
<keyword id="KW-0444">Lipid biosynthesis</keyword>
<keyword id="KW-0443">Lipid metabolism</keyword>
<keyword id="KW-0448">Lipopolysaccharide biosynthesis</keyword>
<keyword id="KW-0472">Membrane</keyword>
<keyword id="KW-0808">Transferase</keyword>
<keyword id="KW-0812">Transmembrane</keyword>
<keyword id="KW-1133">Transmembrane helix</keyword>
<reference key="1">
    <citation type="journal article" date="2010" name="PLoS Genet.">
        <title>Genome sequence of the plant growth promoting endophytic bacterium Enterobacter sp. 638.</title>
        <authorList>
            <person name="Taghavi S."/>
            <person name="van der Lelie D."/>
            <person name="Hoffman A."/>
            <person name="Zhang Y.B."/>
            <person name="Walla M.D."/>
            <person name="Vangronsveld J."/>
            <person name="Newman L."/>
            <person name="Monchy S."/>
        </authorList>
    </citation>
    <scope>NUCLEOTIDE SEQUENCE [LARGE SCALE GENOMIC DNA]</scope>
    <source>
        <strain>638</strain>
    </source>
</reference>